<reference key="1">
    <citation type="journal article" date="1997" name="Electrophoresis">
        <title>HSC-2DPAGE and the two-dimensional gel electrophoresis database of dog heart proteins.</title>
        <authorList>
            <person name="Dunn M.J."/>
            <person name="Corbett J.M."/>
            <person name="Wheeler C.H."/>
        </authorList>
    </citation>
    <scope>PROTEIN SEQUENCE</scope>
    <source>
        <tissue>Heart</tissue>
    </source>
</reference>
<dbReference type="InParanoid" id="P99503"/>
<dbReference type="Proteomes" id="UP000002254">
    <property type="component" value="Unplaced"/>
</dbReference>
<dbReference type="Proteomes" id="UP000694429">
    <property type="component" value="Unplaced"/>
</dbReference>
<dbReference type="Proteomes" id="UP000694542">
    <property type="component" value="Unplaced"/>
</dbReference>
<dbReference type="Proteomes" id="UP000805418">
    <property type="component" value="Unplaced"/>
</dbReference>
<protein>
    <recommendedName>
        <fullName>Unknown protein from spot 11 of 2D-PAGE of heart tissue</fullName>
    </recommendedName>
</protein>
<name>UHA1_CANLF</name>
<keyword id="KW-0903">Direct protein sequencing</keyword>
<keyword id="KW-1185">Reference proteome</keyword>
<sequence>AEAAAAPAPAAAPA</sequence>
<accession>P99503</accession>
<comment type="miscellaneous">
    <text>On the 2D-gel the determined pI of this unknown protein is: 4.3, its MW is: 19.6 kDa.</text>
</comment>
<feature type="chain" id="PRO_0000055478" description="Unknown protein from spot 11 of 2D-PAGE of heart tissue">
    <location>
        <begin position="1"/>
        <end position="14" status="greater than"/>
    </location>
</feature>
<feature type="non-terminal residue">
    <location>
        <position position="14"/>
    </location>
</feature>
<proteinExistence type="evidence at protein level"/>
<organism>
    <name type="scientific">Canis lupus familiaris</name>
    <name type="common">Dog</name>
    <name type="synonym">Canis familiaris</name>
    <dbReference type="NCBI Taxonomy" id="9615"/>
    <lineage>
        <taxon>Eukaryota</taxon>
        <taxon>Metazoa</taxon>
        <taxon>Chordata</taxon>
        <taxon>Craniata</taxon>
        <taxon>Vertebrata</taxon>
        <taxon>Euteleostomi</taxon>
        <taxon>Mammalia</taxon>
        <taxon>Eutheria</taxon>
        <taxon>Laurasiatheria</taxon>
        <taxon>Carnivora</taxon>
        <taxon>Caniformia</taxon>
        <taxon>Canidae</taxon>
        <taxon>Canis</taxon>
    </lineage>
</organism>